<name>SIAT6_MOUSE</name>
<accession>P97325</accession>
<accession>Q922X5</accession>
<gene>
    <name type="primary">St3gal3</name>
    <name type="synonym">Siat3</name>
    <name type="synonym">Siat6</name>
</gene>
<evidence type="ECO:0000250" key="1"/>
<evidence type="ECO:0000255" key="2"/>
<evidence type="ECO:0000269" key="3">
    <source>
    </source>
</evidence>
<evidence type="ECO:0000305" key="4"/>
<dbReference type="EC" id="2.4.3.6" evidence="3"/>
<dbReference type="EMBL" id="X84234">
    <property type="protein sequence ID" value="CAA59013.1"/>
    <property type="molecule type" value="mRNA"/>
</dbReference>
<dbReference type="EMBL" id="AL611952">
    <property type="status" value="NOT_ANNOTATED_CDS"/>
    <property type="molecule type" value="Genomic_DNA"/>
</dbReference>
<dbReference type="EMBL" id="AL626764">
    <property type="status" value="NOT_ANNOTATED_CDS"/>
    <property type="molecule type" value="Genomic_DNA"/>
</dbReference>
<dbReference type="EMBL" id="AL627128">
    <property type="status" value="NOT_ANNOTATED_CDS"/>
    <property type="molecule type" value="Genomic_DNA"/>
</dbReference>
<dbReference type="EMBL" id="CH466552">
    <property type="protein sequence ID" value="EDL30520.1"/>
    <property type="molecule type" value="Genomic_DNA"/>
</dbReference>
<dbReference type="EMBL" id="CH466552">
    <property type="protein sequence ID" value="EDL30522.1"/>
    <property type="molecule type" value="Genomic_DNA"/>
</dbReference>
<dbReference type="EMBL" id="BC006710">
    <property type="protein sequence ID" value="AAH06710.1"/>
    <property type="molecule type" value="mRNA"/>
</dbReference>
<dbReference type="CCDS" id="CCDS18544.1"/>
<dbReference type="RefSeq" id="NP_001155246.1">
    <property type="nucleotide sequence ID" value="NM_001161774.3"/>
</dbReference>
<dbReference type="RefSeq" id="NP_001272449.1">
    <property type="nucleotide sequence ID" value="NM_001285520.2"/>
</dbReference>
<dbReference type="RefSeq" id="NP_033202.3">
    <property type="nucleotide sequence ID" value="NM_009176.5"/>
</dbReference>
<dbReference type="SMR" id="P97325"/>
<dbReference type="FunCoup" id="P97325">
    <property type="interactions" value="171"/>
</dbReference>
<dbReference type="STRING" id="10090.ENSMUSP00000030263"/>
<dbReference type="CAZy" id="GT29">
    <property type="family name" value="Glycosyltransferase Family 29"/>
</dbReference>
<dbReference type="GlyCosmos" id="P97325">
    <property type="glycosylation" value="2 sites, No reported glycans"/>
</dbReference>
<dbReference type="GlyGen" id="P97325">
    <property type="glycosylation" value="2 sites, 2 N-linked glycans (2 sites)"/>
</dbReference>
<dbReference type="iPTMnet" id="P97325"/>
<dbReference type="PhosphoSitePlus" id="P97325"/>
<dbReference type="PaxDb" id="10090-ENSMUSP00000030263"/>
<dbReference type="ProteomicsDB" id="257245"/>
<dbReference type="Antibodypedia" id="32385">
    <property type="antibodies" value="168 antibodies from 26 providers"/>
</dbReference>
<dbReference type="DNASU" id="20441"/>
<dbReference type="Ensembl" id="ENSMUST00000030263.9">
    <property type="protein sequence ID" value="ENSMUSP00000030263.3"/>
    <property type="gene ID" value="ENSMUSG00000028538.13"/>
</dbReference>
<dbReference type="Ensembl" id="ENSMUST00000106410.8">
    <property type="protein sequence ID" value="ENSMUSP00000102018.2"/>
    <property type="gene ID" value="ENSMUSG00000028538.13"/>
</dbReference>
<dbReference type="GeneID" id="20441"/>
<dbReference type="KEGG" id="mmu:20441"/>
<dbReference type="UCSC" id="uc008ujk.3">
    <property type="organism name" value="mouse"/>
</dbReference>
<dbReference type="AGR" id="MGI:1316659"/>
<dbReference type="CTD" id="6487"/>
<dbReference type="MGI" id="MGI:1316659">
    <property type="gene designation" value="St3gal3"/>
</dbReference>
<dbReference type="VEuPathDB" id="HostDB:ENSMUSG00000028538"/>
<dbReference type="eggNOG" id="KOG2692">
    <property type="taxonomic scope" value="Eukaryota"/>
</dbReference>
<dbReference type="GeneTree" id="ENSGT00940000157285"/>
<dbReference type="InParanoid" id="P97325"/>
<dbReference type="OMA" id="FQWEDSS"/>
<dbReference type="OrthoDB" id="10264956at2759"/>
<dbReference type="PhylomeDB" id="P97325"/>
<dbReference type="TreeFam" id="TF354325"/>
<dbReference type="BRENDA" id="2.4.99.2">
    <property type="organism ID" value="3474"/>
</dbReference>
<dbReference type="BRENDA" id="2.4.99.6">
    <property type="organism ID" value="3474"/>
</dbReference>
<dbReference type="BRENDA" id="2.4.99.8">
    <property type="organism ID" value="3474"/>
</dbReference>
<dbReference type="Reactome" id="R-MMU-2022854">
    <property type="pathway name" value="Keratan sulfate biosynthesis"/>
</dbReference>
<dbReference type="Reactome" id="R-MMU-4085001">
    <property type="pathway name" value="Sialic acid metabolism"/>
</dbReference>
<dbReference type="Reactome" id="R-MMU-9037629">
    <property type="pathway name" value="Lewis blood group biosynthesis"/>
</dbReference>
<dbReference type="Reactome" id="R-MMU-977068">
    <property type="pathway name" value="Termination of O-glycan biosynthesis"/>
</dbReference>
<dbReference type="Reactome" id="R-MMU-9840309">
    <property type="pathway name" value="Glycosphingolipid biosynthesis"/>
</dbReference>
<dbReference type="UniPathway" id="UPA00378"/>
<dbReference type="BioGRID-ORCS" id="20441">
    <property type="hits" value="7 hits in 79 CRISPR screens"/>
</dbReference>
<dbReference type="ChiTaRS" id="St3gal3">
    <property type="organism name" value="mouse"/>
</dbReference>
<dbReference type="PRO" id="PR:P97325"/>
<dbReference type="Proteomes" id="UP000000589">
    <property type="component" value="Chromosome 4"/>
</dbReference>
<dbReference type="RNAct" id="P97325">
    <property type="molecule type" value="protein"/>
</dbReference>
<dbReference type="Bgee" id="ENSMUSG00000028538">
    <property type="expression patterns" value="Expressed in hindlimb stylopod muscle and 245 other cell types or tissues"/>
</dbReference>
<dbReference type="ExpressionAtlas" id="P97325">
    <property type="expression patterns" value="baseline and differential"/>
</dbReference>
<dbReference type="GO" id="GO:0032580">
    <property type="term" value="C:Golgi cisterna membrane"/>
    <property type="evidence" value="ECO:0007669"/>
    <property type="project" value="UniProtKB-SubCell"/>
</dbReference>
<dbReference type="GO" id="GO:0003836">
    <property type="term" value="F:beta-galactoside (CMP) alpha-2,3-sialyltransferase activity"/>
    <property type="evidence" value="ECO:0000314"/>
    <property type="project" value="MGI"/>
</dbReference>
<dbReference type="GO" id="GO:0008118">
    <property type="term" value="F:N-acetyllactosaminide alpha-2,3-sialyltransferase activity"/>
    <property type="evidence" value="ECO:0007669"/>
    <property type="project" value="RHEA"/>
</dbReference>
<dbReference type="GO" id="GO:0010706">
    <property type="term" value="P:ganglioside biosynthetic process via lactosylceramide"/>
    <property type="evidence" value="ECO:0000315"/>
    <property type="project" value="UniProtKB"/>
</dbReference>
<dbReference type="GO" id="GO:0006486">
    <property type="term" value="P:protein glycosylation"/>
    <property type="evidence" value="ECO:0000314"/>
    <property type="project" value="MGI"/>
</dbReference>
<dbReference type="CDD" id="cd23981">
    <property type="entry name" value="GT29_ST3GAL3"/>
    <property type="match status" value="1"/>
</dbReference>
<dbReference type="FunFam" id="3.90.1480.20:FF:000003">
    <property type="entry name" value="CMP-N-acetylneuraminate-beta-1,4-galactoside alpha-2,3-sialyltransferase isoform X1"/>
    <property type="match status" value="1"/>
</dbReference>
<dbReference type="Gene3D" id="3.90.1480.20">
    <property type="entry name" value="Glycosyl transferase family 29"/>
    <property type="match status" value="1"/>
</dbReference>
<dbReference type="InterPro" id="IPR001675">
    <property type="entry name" value="Glyco_trans_29"/>
</dbReference>
<dbReference type="InterPro" id="IPR051142">
    <property type="entry name" value="Glycosyltransferase_29"/>
</dbReference>
<dbReference type="InterPro" id="IPR038578">
    <property type="entry name" value="GT29-like_sf"/>
</dbReference>
<dbReference type="InterPro" id="IPR012163">
    <property type="entry name" value="Sialyl_trans"/>
</dbReference>
<dbReference type="PANTHER" id="PTHR13713:SF37">
    <property type="entry name" value="CMP-N-ACETYLNEURAMINATE-BETA-1,4-GALACTOSIDE ALPHA-2,3-SIALYLTRANSFERASE"/>
    <property type="match status" value="1"/>
</dbReference>
<dbReference type="PANTHER" id="PTHR13713">
    <property type="entry name" value="SIALYLTRANSFERASE"/>
    <property type="match status" value="1"/>
</dbReference>
<dbReference type="Pfam" id="PF00777">
    <property type="entry name" value="Glyco_transf_29"/>
    <property type="match status" value="1"/>
</dbReference>
<dbReference type="PIRSF" id="PIRSF005557">
    <property type="entry name" value="Sialyl_trans"/>
    <property type="match status" value="1"/>
</dbReference>
<organism>
    <name type="scientific">Mus musculus</name>
    <name type="common">Mouse</name>
    <dbReference type="NCBI Taxonomy" id="10090"/>
    <lineage>
        <taxon>Eukaryota</taxon>
        <taxon>Metazoa</taxon>
        <taxon>Chordata</taxon>
        <taxon>Craniata</taxon>
        <taxon>Vertebrata</taxon>
        <taxon>Euteleostomi</taxon>
        <taxon>Mammalia</taxon>
        <taxon>Eutheria</taxon>
        <taxon>Euarchontoglires</taxon>
        <taxon>Glires</taxon>
        <taxon>Rodentia</taxon>
        <taxon>Myomorpha</taxon>
        <taxon>Muroidea</taxon>
        <taxon>Muridae</taxon>
        <taxon>Murinae</taxon>
        <taxon>Mus</taxon>
        <taxon>Mus</taxon>
    </lineage>
</organism>
<keyword id="KW-1015">Disulfide bond</keyword>
<keyword id="KW-0325">Glycoprotein</keyword>
<keyword id="KW-0328">Glycosyltransferase</keyword>
<keyword id="KW-0333">Golgi apparatus</keyword>
<keyword id="KW-0472">Membrane</keyword>
<keyword id="KW-1185">Reference proteome</keyword>
<keyword id="KW-0735">Signal-anchor</keyword>
<keyword id="KW-0808">Transferase</keyword>
<keyword id="KW-0812">Transmembrane</keyword>
<keyword id="KW-1133">Transmembrane helix</keyword>
<feature type="chain" id="PRO_0000149267" description="CMP-N-acetylneuraminate-beta-1,4-galactoside alpha-2,3-sialyltransferase">
    <location>
        <begin position="1"/>
        <end position="374"/>
    </location>
</feature>
<feature type="topological domain" description="Cytoplasmic" evidence="2">
    <location>
        <begin position="1"/>
        <end position="8"/>
    </location>
</feature>
<feature type="transmembrane region" description="Helical; Signal-anchor for type II membrane protein" evidence="2">
    <location>
        <begin position="9"/>
        <end position="28"/>
    </location>
</feature>
<feature type="topological domain" description="Lumenal" evidence="2">
    <location>
        <begin position="29"/>
        <end position="374"/>
    </location>
</feature>
<feature type="glycosylation site" description="N-linked (GlcNAc...) asparagine" evidence="2">
    <location>
        <position position="79"/>
    </location>
</feature>
<feature type="glycosylation site" description="N-linked (GlcNAc...) asparagine" evidence="2">
    <location>
        <position position="170"/>
    </location>
</feature>
<feature type="disulfide bond" evidence="1">
    <location>
        <begin position="159"/>
        <end position="313"/>
    </location>
</feature>
<feature type="sequence conflict" description="In Ref. 1; CAA59013." evidence="4" ref="1">
    <original>A</original>
    <variation>P</variation>
    <location>
        <position position="78"/>
    </location>
</feature>
<feature type="sequence conflict" description="In Ref. 1; CAA59013." evidence="4" ref="1">
    <original>N</original>
    <variation>S</variation>
    <location>
        <position position="350"/>
    </location>
</feature>
<sequence>MGLLVFVRNLLLALCLFLVLGFLYYSAWKLHLLQWEDSNSLLLSLDSAGQTLGTEYDRLGFLLKLDSKLPAELATKYANFSEGACKPGYASAMMTAIFPRFSKPAPMFLDDSFRKWARIREFVPPFGIKGQDNLIKAILSVTKEYRLTPALDSLHCRRCIIVGNGGVLANKSLGSRIDDYDIVIRLNSAPVKGFERDVGSKTTLRITYPEGAMQRPEQYERDSLFVLAGFKWQDFKWLKYIVYKERVSASDGFWKSVATRVPKEPPEIRILNPYFIQEAAFTLIGLPFNNGLMGRGNIPTLGSVAVTMALHGCDEVAVAGFGYDMNTPNAPLHYYETVRMAAIKESWTHNIQREKEFLRKLVKARVITDLSSGI</sequence>
<protein>
    <recommendedName>
        <fullName>CMP-N-acetylneuraminate-beta-1,4-galactoside alpha-2,3-sialyltransferase</fullName>
        <ecNumber evidence="3">2.4.3.6</ecNumber>
    </recommendedName>
    <alternativeName>
        <fullName>Beta-galactoside alpha-2,3-sialyltransferase 3</fullName>
        <shortName>Alpha 2,3-ST 3</shortName>
    </alternativeName>
    <alternativeName>
        <fullName>Gal beta-1,3(4) GlcNAc alpha-2,3 sialyltransferase</fullName>
    </alternativeName>
    <alternativeName>
        <fullName>N-acetyllactosaminide alpha-2,3-sialyltransferase</fullName>
    </alternativeName>
    <alternativeName>
        <fullName>ST3Gal III</fullName>
        <shortName>ST3GalIII</shortName>
    </alternativeName>
    <alternativeName>
        <fullName>ST3N</fullName>
    </alternativeName>
    <alternativeName>
        <fullName>Sialyltransferase 6</fullName>
    </alternativeName>
</protein>
<comment type="function">
    <text evidence="3">Catalyzes the formation of the NeuAc-alpha-2,3-Gal-beta-1,4-GlcNAc-, NeuAc-alpha-2,3-Gal-beta-1,3-GlcNAc- and NeuAc-alpha-2,3-Gal-beta-1,3-GalNAc- sequences found in terminal carbohydrate groups of glycoproteins and glycolipids. The highest activity is toward Gal-beta-1,3-GlcNAc and the lowest toward Gal-beta-1,3-GalNAc.</text>
</comment>
<comment type="catalytic activity">
    <reaction evidence="3">
        <text>a beta-D-galactosyl-(1-&gt;4)-N-acetyl-beta-D-glucosaminyl derivative + CMP-N-acetyl-beta-neuraminate = an N-acetyl-alpha-neuraminyl-(2-&gt;3)-beta-D-galactosyl-(1-&gt;4)-N-acetyl-beta-D-glucosaminyl derivative + CMP + H(+)</text>
        <dbReference type="Rhea" id="RHEA:52316"/>
        <dbReference type="ChEBI" id="CHEBI:15378"/>
        <dbReference type="ChEBI" id="CHEBI:57812"/>
        <dbReference type="ChEBI" id="CHEBI:60377"/>
        <dbReference type="ChEBI" id="CHEBI:133507"/>
        <dbReference type="ChEBI" id="CHEBI:136545"/>
        <dbReference type="EC" id="2.4.3.6"/>
    </reaction>
</comment>
<comment type="biophysicochemical properties">
    <kinetics>
        <KM evidence="3">0.32 mM for Gal-beta-1,3-GlcNAc</KM>
        <KM evidence="3">3 mM for Gal-beta-1,4-GlcNAc</KM>
        <KM evidence="3">2.2 mM for Gal-beta-1,3-GalNAc</KM>
        <text evidence="3">Relative Vmax is 4:2:1 for Gal-beta-1,3-GlcNAc, Gal-beta-1,4-GlcNAc and Gal-beta-1,3-GalNAc as substrate, respectively.</text>
    </kinetics>
    <phDependence>
        <text evidence="3">Optimum pH is 6.4.</text>
    </phDependence>
</comment>
<comment type="pathway">
    <text>Protein modification; protein glycosylation.</text>
</comment>
<comment type="subcellular location">
    <subcellularLocation>
        <location>Membrane</location>
        <topology>Single-pass type II membrane protein</topology>
    </subcellularLocation>
    <subcellularLocation>
        <location>Golgi apparatus</location>
        <location>Golgi stack membrane</location>
        <topology>Single-pass type II membrane protein</topology>
    </subcellularLocation>
</comment>
<comment type="tissue specificity">
    <text evidence="3">Found in all tissues tested. High expression found in brain, liver, kidney, colon, heart and spleen.</text>
</comment>
<comment type="developmental stage">
    <text>Developmental regulation only occurs in liver, heart, kidney and spleen.</text>
</comment>
<comment type="similarity">
    <text evidence="4">Belongs to the glycosyltransferase 29 family.</text>
</comment>
<comment type="online information" name="Functional Glycomics Gateway - GTase">
    <link uri="http://www.functionalglycomics.org/glycomics/molecule/jsp/glycoEnzyme/viewGlycoEnzyme.jsp?gbpId=gt_mou_644"/>
    <text>ST3Gal III</text>
</comment>
<reference key="1">
    <citation type="journal article" date="1997" name="Glycobiology">
        <title>Mouse beta-galactoside alpha2,3-sialyltransferases: comparison of in vitro substrate specificities and tissue specific expression.</title>
        <authorList>
            <person name="Kono M."/>
            <person name="Ohyama Y."/>
            <person name="Lee Y.-C."/>
            <person name="Hamamoto T."/>
            <person name="Kojima N."/>
            <person name="Tsuji S."/>
        </authorList>
    </citation>
    <scope>NUCLEOTIDE SEQUENCE [MRNA]</scope>
    <scope>FUNCTION</scope>
    <scope>CATALYTIC ACTIVITY</scope>
    <scope>TISSUE SPECIFICITY</scope>
    <scope>BIOPHYSICOCHEMICAL PROPERTIES</scope>
    <source>
        <tissue>Brain</tissue>
    </source>
</reference>
<reference key="2">
    <citation type="journal article" date="2009" name="PLoS Biol.">
        <title>Lineage-specific biology revealed by a finished genome assembly of the mouse.</title>
        <authorList>
            <person name="Church D.M."/>
            <person name="Goodstadt L."/>
            <person name="Hillier L.W."/>
            <person name="Zody M.C."/>
            <person name="Goldstein S."/>
            <person name="She X."/>
            <person name="Bult C.J."/>
            <person name="Agarwala R."/>
            <person name="Cherry J.L."/>
            <person name="DiCuccio M."/>
            <person name="Hlavina W."/>
            <person name="Kapustin Y."/>
            <person name="Meric P."/>
            <person name="Maglott D."/>
            <person name="Birtle Z."/>
            <person name="Marques A.C."/>
            <person name="Graves T."/>
            <person name="Zhou S."/>
            <person name="Teague B."/>
            <person name="Potamousis K."/>
            <person name="Churas C."/>
            <person name="Place M."/>
            <person name="Herschleb J."/>
            <person name="Runnheim R."/>
            <person name="Forrest D."/>
            <person name="Amos-Landgraf J."/>
            <person name="Schwartz D.C."/>
            <person name="Cheng Z."/>
            <person name="Lindblad-Toh K."/>
            <person name="Eichler E.E."/>
            <person name="Ponting C.P."/>
        </authorList>
    </citation>
    <scope>NUCLEOTIDE SEQUENCE [LARGE SCALE GENOMIC DNA]</scope>
    <source>
        <strain>C57BL/6J</strain>
    </source>
</reference>
<reference key="3">
    <citation type="submission" date="2005-09" db="EMBL/GenBank/DDBJ databases">
        <authorList>
            <person name="Mural R.J."/>
            <person name="Adams M.D."/>
            <person name="Myers E.W."/>
            <person name="Smith H.O."/>
            <person name="Venter J.C."/>
        </authorList>
    </citation>
    <scope>NUCLEOTIDE SEQUENCE [LARGE SCALE GENOMIC DNA]</scope>
</reference>
<reference key="4">
    <citation type="journal article" date="2004" name="Genome Res.">
        <title>The status, quality, and expansion of the NIH full-length cDNA project: the Mammalian Gene Collection (MGC).</title>
        <authorList>
            <consortium name="The MGC Project Team"/>
        </authorList>
    </citation>
    <scope>NUCLEOTIDE SEQUENCE [LARGE SCALE MRNA]</scope>
    <source>
        <strain>FVB/N</strain>
        <tissue>Mammary tumor</tissue>
    </source>
</reference>
<proteinExistence type="evidence at protein level"/>